<dbReference type="EC" id="3.-.-.-"/>
<dbReference type="EMBL" id="CP001956">
    <property type="protein sequence ID" value="ADE04462.1"/>
    <property type="molecule type" value="Genomic_DNA"/>
</dbReference>
<dbReference type="RefSeq" id="WP_004042220.1">
    <property type="nucleotide sequence ID" value="NC_013967.1"/>
</dbReference>
<dbReference type="SMR" id="D4GWH7"/>
<dbReference type="STRING" id="309800.HVO_2328"/>
<dbReference type="PaxDb" id="309800-C498_06935"/>
<dbReference type="EnsemblBacteria" id="ADE04462">
    <property type="protein sequence ID" value="ADE04462"/>
    <property type="gene ID" value="HVO_2328"/>
</dbReference>
<dbReference type="GeneID" id="8925089"/>
<dbReference type="KEGG" id="hvo:HVO_2328"/>
<dbReference type="eggNOG" id="arCOG01943">
    <property type="taxonomic scope" value="Archaea"/>
</dbReference>
<dbReference type="HOGENOM" id="CLU_068979_5_2_2"/>
<dbReference type="OrthoDB" id="202119at2157"/>
<dbReference type="Proteomes" id="UP000008243">
    <property type="component" value="Chromosome"/>
</dbReference>
<dbReference type="GO" id="GO:0016787">
    <property type="term" value="F:hydrolase activity"/>
    <property type="evidence" value="ECO:0007669"/>
    <property type="project" value="UniProtKB-KW"/>
</dbReference>
<dbReference type="CDD" id="cd01014">
    <property type="entry name" value="nicotinamidase_related"/>
    <property type="match status" value="1"/>
</dbReference>
<dbReference type="Gene3D" id="3.40.50.850">
    <property type="entry name" value="Isochorismatase-like"/>
    <property type="match status" value="1"/>
</dbReference>
<dbReference type="InterPro" id="IPR000868">
    <property type="entry name" value="Isochorismatase-like_dom"/>
</dbReference>
<dbReference type="InterPro" id="IPR050272">
    <property type="entry name" value="Isochorismatase-like_hydrls"/>
</dbReference>
<dbReference type="InterPro" id="IPR036380">
    <property type="entry name" value="Isochorismatase-like_sf"/>
</dbReference>
<dbReference type="PANTHER" id="PTHR43540:SF1">
    <property type="entry name" value="ISOCHORISMATASE HYDROLASE"/>
    <property type="match status" value="1"/>
</dbReference>
<dbReference type="PANTHER" id="PTHR43540">
    <property type="entry name" value="PEROXYUREIDOACRYLATE/UREIDOACRYLATE AMIDOHYDROLASE-RELATED"/>
    <property type="match status" value="1"/>
</dbReference>
<dbReference type="Pfam" id="PF00857">
    <property type="entry name" value="Isochorismatase"/>
    <property type="match status" value="1"/>
</dbReference>
<dbReference type="SUPFAM" id="SSF52499">
    <property type="entry name" value="Isochorismatase-like hydrolases"/>
    <property type="match status" value="1"/>
</dbReference>
<proteinExistence type="evidence at protein level"/>
<sequence>MTAADLPDDAVLVCIDMQVGFDDPAWGDRNNPEMEARVADLLAAWRAADRPVVHVRHDSAEPDSPLRSDGEGFAWKPEAEPVDGEPVFTKRVNSGFIGTDLEAWLRERDHSTLVVCGLTTDHCVSTTTRMAENLGFDVYLPADATATFDREGHDGERFSADEMHRTALAHLNREFATVVESADLSATR</sequence>
<gene>
    <name type="ordered locus">HVO_2328</name>
</gene>
<feature type="chain" id="PRO_0000397105" description="Uncharacterized isochorismatase family protein HVO_2328">
    <location>
        <begin position="1"/>
        <end position="188"/>
    </location>
</feature>
<feature type="cross-link" description="Glycyl lysine isopeptide (Lys-Gly) (interchain with G-Cter in SAMP2)">
    <location>
        <position position="90"/>
    </location>
</feature>
<comment type="similarity">
    <text evidence="1">Belongs to the isochorismatase family.</text>
</comment>
<reference key="1">
    <citation type="journal article" date="2010" name="PLoS ONE">
        <title>The complete genome sequence of Haloferax volcanii DS2, a model archaeon.</title>
        <authorList>
            <person name="Hartman A.L."/>
            <person name="Norais C."/>
            <person name="Badger J.H."/>
            <person name="Delmas S."/>
            <person name="Haldenby S."/>
            <person name="Madupu R."/>
            <person name="Robinson J."/>
            <person name="Khouri H."/>
            <person name="Ren Q."/>
            <person name="Lowe T.M."/>
            <person name="Maupin-Furlow J."/>
            <person name="Pohlschroder M."/>
            <person name="Daniels C."/>
            <person name="Pfeiffer F."/>
            <person name="Allers T."/>
            <person name="Eisen J.A."/>
        </authorList>
    </citation>
    <scope>NUCLEOTIDE SEQUENCE [LARGE SCALE GENOMIC DNA]</scope>
    <source>
        <strain>ATCC 29605 / DSM 3757 / JCM 8879 / NBRC 14742 / NCIMB 2012 / VKM B-1768 / DS2</strain>
    </source>
</reference>
<reference key="2">
    <citation type="journal article" date="2010" name="Nature">
        <title>Ubiquitin-like small archaeal modifier proteins (SAMPs) in Haloferax volcanii.</title>
        <authorList>
            <person name="Humbard M.A."/>
            <person name="Miranda H.V."/>
            <person name="Lim J.M."/>
            <person name="Krause D.J."/>
            <person name="Pritz J.R."/>
            <person name="Zhou G."/>
            <person name="Chen S."/>
            <person name="Wells L."/>
            <person name="Maupin-Furlow J.A."/>
        </authorList>
    </citation>
    <scope>SAMPYLATION AT LYS-90</scope>
    <scope>IDENTIFICATION BY MASS SPECTROMETRY</scope>
</reference>
<name>Y2328_HALVD</name>
<accession>D4GWH7</accession>
<protein>
    <recommendedName>
        <fullName>Uncharacterized isochorismatase family protein HVO_2328</fullName>
        <ecNumber>3.-.-.-</ecNumber>
    </recommendedName>
</protein>
<keyword id="KW-0378">Hydrolase</keyword>
<keyword id="KW-1017">Isopeptide bond</keyword>
<keyword id="KW-1185">Reference proteome</keyword>
<keyword id="KW-0832">Ubl conjugation</keyword>
<evidence type="ECO:0000305" key="1"/>
<organism>
    <name type="scientific">Haloferax volcanii (strain ATCC 29605 / DSM 3757 / JCM 8879 / NBRC 14742 / NCIMB 2012 / VKM B-1768 / DS2)</name>
    <name type="common">Halobacterium volcanii</name>
    <dbReference type="NCBI Taxonomy" id="309800"/>
    <lineage>
        <taxon>Archaea</taxon>
        <taxon>Methanobacteriati</taxon>
        <taxon>Methanobacteriota</taxon>
        <taxon>Stenosarchaea group</taxon>
        <taxon>Halobacteria</taxon>
        <taxon>Halobacteriales</taxon>
        <taxon>Haloferacaceae</taxon>
        <taxon>Haloferax</taxon>
    </lineage>
</organism>